<evidence type="ECO:0000255" key="1">
    <source>
        <dbReference type="HAMAP-Rule" id="MF_00037"/>
    </source>
</evidence>
<keyword id="KW-0131">Cell cycle</keyword>
<keyword id="KW-0132">Cell division</keyword>
<keyword id="KW-0133">Cell shape</keyword>
<keyword id="KW-0961">Cell wall biogenesis/degradation</keyword>
<keyword id="KW-0963">Cytoplasm</keyword>
<keyword id="KW-0274">FAD</keyword>
<keyword id="KW-0285">Flavoprotein</keyword>
<keyword id="KW-0521">NADP</keyword>
<keyword id="KW-0560">Oxidoreductase</keyword>
<keyword id="KW-0573">Peptidoglycan synthesis</keyword>
<dbReference type="EC" id="1.3.1.98" evidence="1"/>
<dbReference type="EMBL" id="AP007255">
    <property type="protein sequence ID" value="BAE52654.1"/>
    <property type="molecule type" value="Genomic_DNA"/>
</dbReference>
<dbReference type="SMR" id="Q2W0H1"/>
<dbReference type="STRING" id="342108.amb3850"/>
<dbReference type="KEGG" id="mag:amb3850"/>
<dbReference type="HOGENOM" id="CLU_035304_1_0_5"/>
<dbReference type="OrthoDB" id="9804753at2"/>
<dbReference type="UniPathway" id="UPA00219"/>
<dbReference type="Proteomes" id="UP000007058">
    <property type="component" value="Chromosome"/>
</dbReference>
<dbReference type="GO" id="GO:0005829">
    <property type="term" value="C:cytosol"/>
    <property type="evidence" value="ECO:0007669"/>
    <property type="project" value="TreeGrafter"/>
</dbReference>
<dbReference type="GO" id="GO:0071949">
    <property type="term" value="F:FAD binding"/>
    <property type="evidence" value="ECO:0007669"/>
    <property type="project" value="InterPro"/>
</dbReference>
<dbReference type="GO" id="GO:0008762">
    <property type="term" value="F:UDP-N-acetylmuramate dehydrogenase activity"/>
    <property type="evidence" value="ECO:0007669"/>
    <property type="project" value="UniProtKB-UniRule"/>
</dbReference>
<dbReference type="GO" id="GO:0051301">
    <property type="term" value="P:cell division"/>
    <property type="evidence" value="ECO:0007669"/>
    <property type="project" value="UniProtKB-KW"/>
</dbReference>
<dbReference type="GO" id="GO:0071555">
    <property type="term" value="P:cell wall organization"/>
    <property type="evidence" value="ECO:0007669"/>
    <property type="project" value="UniProtKB-KW"/>
</dbReference>
<dbReference type="GO" id="GO:0009252">
    <property type="term" value="P:peptidoglycan biosynthetic process"/>
    <property type="evidence" value="ECO:0007669"/>
    <property type="project" value="UniProtKB-UniRule"/>
</dbReference>
<dbReference type="GO" id="GO:0008360">
    <property type="term" value="P:regulation of cell shape"/>
    <property type="evidence" value="ECO:0007669"/>
    <property type="project" value="UniProtKB-KW"/>
</dbReference>
<dbReference type="Gene3D" id="3.30.465.10">
    <property type="match status" value="1"/>
</dbReference>
<dbReference type="Gene3D" id="3.90.78.10">
    <property type="entry name" value="UDP-N-acetylenolpyruvoylglucosamine reductase, C-terminal domain"/>
    <property type="match status" value="1"/>
</dbReference>
<dbReference type="Gene3D" id="3.30.43.10">
    <property type="entry name" value="Uridine Diphospho-n-acetylenolpyruvylglucosamine Reductase, domain 2"/>
    <property type="match status" value="1"/>
</dbReference>
<dbReference type="HAMAP" id="MF_00037">
    <property type="entry name" value="MurB"/>
    <property type="match status" value="1"/>
</dbReference>
<dbReference type="InterPro" id="IPR016166">
    <property type="entry name" value="FAD-bd_PCMH"/>
</dbReference>
<dbReference type="InterPro" id="IPR036318">
    <property type="entry name" value="FAD-bd_PCMH-like_sf"/>
</dbReference>
<dbReference type="InterPro" id="IPR016167">
    <property type="entry name" value="FAD-bd_PCMH_sub1"/>
</dbReference>
<dbReference type="InterPro" id="IPR016169">
    <property type="entry name" value="FAD-bd_PCMH_sub2"/>
</dbReference>
<dbReference type="InterPro" id="IPR003170">
    <property type="entry name" value="MurB"/>
</dbReference>
<dbReference type="InterPro" id="IPR011601">
    <property type="entry name" value="MurB_C"/>
</dbReference>
<dbReference type="InterPro" id="IPR036635">
    <property type="entry name" value="MurB_C_sf"/>
</dbReference>
<dbReference type="InterPro" id="IPR006094">
    <property type="entry name" value="Oxid_FAD_bind_N"/>
</dbReference>
<dbReference type="NCBIfam" id="TIGR00179">
    <property type="entry name" value="murB"/>
    <property type="match status" value="1"/>
</dbReference>
<dbReference type="NCBIfam" id="NF010480">
    <property type="entry name" value="PRK13905.1"/>
    <property type="match status" value="1"/>
</dbReference>
<dbReference type="PANTHER" id="PTHR21071">
    <property type="entry name" value="UDP-N-ACETYLENOLPYRUVOYLGLUCOSAMINE REDUCTASE"/>
    <property type="match status" value="1"/>
</dbReference>
<dbReference type="PANTHER" id="PTHR21071:SF4">
    <property type="entry name" value="UDP-N-ACETYLENOLPYRUVOYLGLUCOSAMINE REDUCTASE"/>
    <property type="match status" value="1"/>
</dbReference>
<dbReference type="Pfam" id="PF01565">
    <property type="entry name" value="FAD_binding_4"/>
    <property type="match status" value="1"/>
</dbReference>
<dbReference type="Pfam" id="PF02873">
    <property type="entry name" value="MurB_C"/>
    <property type="match status" value="1"/>
</dbReference>
<dbReference type="SUPFAM" id="SSF56176">
    <property type="entry name" value="FAD-binding/transporter-associated domain-like"/>
    <property type="match status" value="1"/>
</dbReference>
<dbReference type="SUPFAM" id="SSF56194">
    <property type="entry name" value="Uridine diphospho-N-Acetylenolpyruvylglucosamine reductase, MurB, C-terminal domain"/>
    <property type="match status" value="1"/>
</dbReference>
<dbReference type="PROSITE" id="PS51387">
    <property type="entry name" value="FAD_PCMH"/>
    <property type="match status" value="1"/>
</dbReference>
<feature type="chain" id="PRO_0000332470" description="UDP-N-acetylenolpyruvoylglucosamine reductase">
    <location>
        <begin position="1"/>
        <end position="307"/>
    </location>
</feature>
<feature type="domain" description="FAD-binding PCMH-type" evidence="1">
    <location>
        <begin position="34"/>
        <end position="197"/>
    </location>
</feature>
<feature type="active site" evidence="1">
    <location>
        <position position="177"/>
    </location>
</feature>
<feature type="active site" description="Proton donor" evidence="1">
    <location>
        <position position="226"/>
    </location>
</feature>
<feature type="active site" evidence="1">
    <location>
        <position position="296"/>
    </location>
</feature>
<protein>
    <recommendedName>
        <fullName evidence="1">UDP-N-acetylenolpyruvoylglucosamine reductase</fullName>
        <ecNumber evidence="1">1.3.1.98</ecNumber>
    </recommendedName>
    <alternativeName>
        <fullName evidence="1">UDP-N-acetylmuramate dehydrogenase</fullName>
    </alternativeName>
</protein>
<comment type="function">
    <text evidence="1">Cell wall formation.</text>
</comment>
<comment type="catalytic activity">
    <reaction evidence="1">
        <text>UDP-N-acetyl-alpha-D-muramate + NADP(+) = UDP-N-acetyl-3-O-(1-carboxyvinyl)-alpha-D-glucosamine + NADPH + H(+)</text>
        <dbReference type="Rhea" id="RHEA:12248"/>
        <dbReference type="ChEBI" id="CHEBI:15378"/>
        <dbReference type="ChEBI" id="CHEBI:57783"/>
        <dbReference type="ChEBI" id="CHEBI:58349"/>
        <dbReference type="ChEBI" id="CHEBI:68483"/>
        <dbReference type="ChEBI" id="CHEBI:70757"/>
        <dbReference type="EC" id="1.3.1.98"/>
    </reaction>
</comment>
<comment type="cofactor">
    <cofactor evidence="1">
        <name>FAD</name>
        <dbReference type="ChEBI" id="CHEBI:57692"/>
    </cofactor>
</comment>
<comment type="pathway">
    <text evidence="1">Cell wall biogenesis; peptidoglycan biosynthesis.</text>
</comment>
<comment type="subcellular location">
    <subcellularLocation>
        <location evidence="1">Cytoplasm</location>
    </subcellularLocation>
</comment>
<comment type="similarity">
    <text evidence="1">Belongs to the MurB family.</text>
</comment>
<gene>
    <name evidence="1" type="primary">murB</name>
    <name type="ordered locus">amb3850</name>
</gene>
<proteinExistence type="inferred from homology"/>
<accession>Q2W0H1</accession>
<reference key="1">
    <citation type="journal article" date="2005" name="DNA Res.">
        <title>Complete genome sequence of the facultative anaerobic magnetotactic bacterium Magnetospirillum sp. strain AMB-1.</title>
        <authorList>
            <person name="Matsunaga T."/>
            <person name="Okamura Y."/>
            <person name="Fukuda Y."/>
            <person name="Wahyudi A.T."/>
            <person name="Murase Y."/>
            <person name="Takeyama H."/>
        </authorList>
    </citation>
    <scope>NUCLEOTIDE SEQUENCE [LARGE SCALE GENOMIC DNA]</scope>
    <source>
        <strain>ATCC 700264 / AMB-1</strain>
    </source>
</reference>
<organism>
    <name type="scientific">Paramagnetospirillum magneticum (strain ATCC 700264 / AMB-1)</name>
    <name type="common">Magnetospirillum magneticum</name>
    <dbReference type="NCBI Taxonomy" id="342108"/>
    <lineage>
        <taxon>Bacteria</taxon>
        <taxon>Pseudomonadati</taxon>
        <taxon>Pseudomonadota</taxon>
        <taxon>Alphaproteobacteria</taxon>
        <taxon>Rhodospirillales</taxon>
        <taxon>Magnetospirillaceae</taxon>
        <taxon>Paramagnetospirillum</taxon>
    </lineage>
</organism>
<name>MURB_PARM1</name>
<sequence>MTARKDSDWRDMLPRVQGRMSFDAPMAPFTWFRVGGNAEALFRPADLDDLIAVLEVLPPQVPVTVVGVGSNLLVRDGGVPGMVIRLAGPFATIDVMGDTITAGAGALDLTVARTAEEAGLAGLEFLSGVPGTIGGALRMNAGAFGAEMKDVTVSAQALDRAGNLQILGPEELGFSYRRSAVPEGWIFLSASLKGRPGKPADIGARMAEIARVREESQPVKVRTGGSTFANPEGHSAWKLIDAAGCRGLVMGGAQVSEKHCNFLLNTGDATAADIEDLGEEVRRRVLETSGIDLHWEIRRIGIRRDAS</sequence>